<organism>
    <name type="scientific">Staphylococcus aureus (strain MRSA252)</name>
    <dbReference type="NCBI Taxonomy" id="282458"/>
    <lineage>
        <taxon>Bacteria</taxon>
        <taxon>Bacillati</taxon>
        <taxon>Bacillota</taxon>
        <taxon>Bacilli</taxon>
        <taxon>Bacillales</taxon>
        <taxon>Staphylococcaceae</taxon>
        <taxon>Staphylococcus</taxon>
    </lineage>
</organism>
<comment type="function">
    <text evidence="1">Involved in bacillithiol (BSH) biosynthesis. May catalyze the last step of the pathway, the addition of cysteine to glucosamine malate (GlcN-Mal) to generate BSH.</text>
</comment>
<comment type="similarity">
    <text evidence="1">Belongs to the BshC family.</text>
</comment>
<reference key="1">
    <citation type="journal article" date="2004" name="Proc. Natl. Acad. Sci. U.S.A.">
        <title>Complete genomes of two clinical Staphylococcus aureus strains: evidence for the rapid evolution of virulence and drug resistance.</title>
        <authorList>
            <person name="Holden M.T.G."/>
            <person name="Feil E.J."/>
            <person name="Lindsay J.A."/>
            <person name="Peacock S.J."/>
            <person name="Day N.P.J."/>
            <person name="Enright M.C."/>
            <person name="Foster T.J."/>
            <person name="Moore C.E."/>
            <person name="Hurst L."/>
            <person name="Atkin R."/>
            <person name="Barron A."/>
            <person name="Bason N."/>
            <person name="Bentley S.D."/>
            <person name="Chillingworth C."/>
            <person name="Chillingworth T."/>
            <person name="Churcher C."/>
            <person name="Clark L."/>
            <person name="Corton C."/>
            <person name="Cronin A."/>
            <person name="Doggett J."/>
            <person name="Dowd L."/>
            <person name="Feltwell T."/>
            <person name="Hance Z."/>
            <person name="Harris B."/>
            <person name="Hauser H."/>
            <person name="Holroyd S."/>
            <person name="Jagels K."/>
            <person name="James K.D."/>
            <person name="Lennard N."/>
            <person name="Line A."/>
            <person name="Mayes R."/>
            <person name="Moule S."/>
            <person name="Mungall K."/>
            <person name="Ormond D."/>
            <person name="Quail M.A."/>
            <person name="Rabbinowitsch E."/>
            <person name="Rutherford K.M."/>
            <person name="Sanders M."/>
            <person name="Sharp S."/>
            <person name="Simmonds M."/>
            <person name="Stevens K."/>
            <person name="Whitehead S."/>
            <person name="Barrell B.G."/>
            <person name="Spratt B.G."/>
            <person name="Parkhill J."/>
        </authorList>
    </citation>
    <scope>NUCLEOTIDE SEQUENCE [LARGE SCALE GENOMIC DNA]</scope>
    <source>
        <strain>MRSA252</strain>
    </source>
</reference>
<feature type="chain" id="PRO_0000378256" description="Putative cysteine ligase BshC">
    <location>
        <begin position="1"/>
        <end position="537"/>
    </location>
</feature>
<feature type="coiled-coil region" evidence="1">
    <location>
        <begin position="422"/>
        <end position="450"/>
    </location>
</feature>
<dbReference type="EC" id="6.-.-.-" evidence="1"/>
<dbReference type="EMBL" id="BX571856">
    <property type="protein sequence ID" value="CAG40155.1"/>
    <property type="molecule type" value="Genomic_DNA"/>
</dbReference>
<dbReference type="RefSeq" id="WP_000340456.1">
    <property type="nucleotide sequence ID" value="NC_002952.2"/>
</dbReference>
<dbReference type="SMR" id="Q6GHQ8"/>
<dbReference type="KEGG" id="sar:SAR1153"/>
<dbReference type="HOGENOM" id="CLU_022249_0_0_9"/>
<dbReference type="Proteomes" id="UP000000596">
    <property type="component" value="Chromosome"/>
</dbReference>
<dbReference type="GO" id="GO:0016874">
    <property type="term" value="F:ligase activity"/>
    <property type="evidence" value="ECO:0007669"/>
    <property type="project" value="UniProtKB-UniRule"/>
</dbReference>
<dbReference type="HAMAP" id="MF_01867">
    <property type="entry name" value="BshC"/>
    <property type="match status" value="1"/>
</dbReference>
<dbReference type="InterPro" id="IPR011199">
    <property type="entry name" value="Bacillithiol_biosynth_BshC"/>
</dbReference>
<dbReference type="InterPro" id="IPR055399">
    <property type="entry name" value="CC_BshC"/>
</dbReference>
<dbReference type="InterPro" id="IPR055398">
    <property type="entry name" value="Rossmann-like_BshC"/>
</dbReference>
<dbReference type="NCBIfam" id="TIGR03998">
    <property type="entry name" value="thiol_BshC"/>
    <property type="match status" value="1"/>
</dbReference>
<dbReference type="Pfam" id="PF24850">
    <property type="entry name" value="CC_BshC"/>
    <property type="match status" value="1"/>
</dbReference>
<dbReference type="Pfam" id="PF10079">
    <property type="entry name" value="Rossmann-like_BshC"/>
    <property type="match status" value="1"/>
</dbReference>
<dbReference type="PIRSF" id="PIRSF012535">
    <property type="entry name" value="UCP012535"/>
    <property type="match status" value="1"/>
</dbReference>
<sequence length="537" mass="62956">MDCKVVSLNEKDQFIPKIKSSDPVITGLFQYDAAQQISFEKRMSKENNGREAALANVIREYMNDLKLSSEQELNIQHLANGSKVVIGGQQAGLFGGPLYTFHKIFSIITLSKELTDTHKQQVVPVFWIAGEDHDFDEVNHTFVYNENHGSLHKVKYHTMEMPETTVSRYYPDKAELKQTLKTMFIHMKETVHTQGLLEICDRIIDQYDSWTDMFKALLHETFKAYGVLFIDAQFEPLRKMEAPMFKKILKKHQLLDDAFRATQKRTQNQGLKAMIQTDTNVHLFLHDENMRQLVSYDGKHFRLNKTDKKYIKEEIINIAENQPELFSNNVVTRPLMEEWLFNTVAFIGGPSEIKYWAELKDVFELFDVEMPIVMPRLRITYLNDRIEKLLSKYNIPLEKVLVDGVEGERSKFIREQASDQFIEKVEGMIEQQRRLYQDLLDEVAGNQNNINLVNKNNEIHIQQYDYLLKRYLLNIERENDISMKQFREIQETLHPMGGLQERIWNPLQILNDFGTDVFKPSTYPPLSYTFDHIIIKP</sequence>
<proteinExistence type="inferred from homology"/>
<protein>
    <recommendedName>
        <fullName evidence="1">Putative cysteine ligase BshC</fullName>
        <ecNumber evidence="1">6.-.-.-</ecNumber>
    </recommendedName>
</protein>
<gene>
    <name evidence="1" type="primary">bshC</name>
    <name type="ordered locus">SAR1153</name>
</gene>
<accession>Q6GHQ8</accession>
<keyword id="KW-0175">Coiled coil</keyword>
<keyword id="KW-0436">Ligase</keyword>
<evidence type="ECO:0000255" key="1">
    <source>
        <dbReference type="HAMAP-Rule" id="MF_01867"/>
    </source>
</evidence>
<name>BSHC_STAAR</name>